<keyword id="KW-0119">Carbohydrate metabolism</keyword>
<keyword id="KW-0146">Chitin degradation</keyword>
<keyword id="KW-0147">Chitin-binding</keyword>
<keyword id="KW-1015">Disulfide bond</keyword>
<keyword id="KW-0326">Glycosidase</keyword>
<keyword id="KW-0378">Hydrolase</keyword>
<keyword id="KW-0624">Polysaccharide degradation</keyword>
<keyword id="KW-1185">Reference proteome</keyword>
<keyword id="KW-0677">Repeat</keyword>
<keyword id="KW-0843">Virulence</keyword>
<gene>
    <name evidence="6" type="primary">LysM18</name>
    <name type="ORF">PEX2_091460</name>
</gene>
<organism>
    <name type="scientific">Penicillium expansum</name>
    <name type="common">Blue mold rot fungus</name>
    <dbReference type="NCBI Taxonomy" id="27334"/>
    <lineage>
        <taxon>Eukaryota</taxon>
        <taxon>Fungi</taxon>
        <taxon>Dikarya</taxon>
        <taxon>Ascomycota</taxon>
        <taxon>Pezizomycotina</taxon>
        <taxon>Eurotiomycetes</taxon>
        <taxon>Eurotiomycetidae</taxon>
        <taxon>Eurotiales</taxon>
        <taxon>Aspergillaceae</taxon>
        <taxon>Penicillium</taxon>
    </lineage>
</organism>
<sequence length="1444" mass="154180">MYHNFDQLASCQESLFYSFSFLDPVDDAHTGHHIYACTSFGPDWGNLPANTTNLLLQSSDAPEPVNGTYQIGYWPAATGSSVLSSLVTLTNQLRQYLVRGLGSIDRPTILFARYGSTSVGLYIGQALDNRGIGENVLSSLSDSIASANASLAASVAMQFCEPGQTSHHVFGLIATGNGTFDSVQAALSSWSKAKCLTFPVVQNITGTLSLVKPLFNASYYATTVHPTRPPVSHATSTSSNATSVRGRALAPRTTCSTVQVVSGNCYDSLASECGITLAKFLQYNKVTDDDCSTLVIGEHFCCSAGQLPDFSPKPQSDGTCTTYTIKANDNCETIAASYSLTVDELENYNNDTWAWEGCNPLYVNNIICLSEGNAPMPASLANAECGPQVPGTLTPARGTNISTLNECPLNACCDVWGQCGTTSDFCINTGTGAPGTAKNGTNGCISNCGTAIVQSDKPATYRKVGFYEGFNLQRPCLYQDVSQIDLSAYTHIYFAFGALSSSYEVQIPNGTATGTTYEFDLFKQIVGTTRILSIGGWAFSTDPSTYMIFRDGVTSANRLTMATNIADFIKDHDLDGVNIDWEYPGASDIPGIPAASTDDGTNYLAFLAVLKNLLPDKEITIAAPASYWYLKGFPIKDMAELVDYVIYMTYDLHGQWDSHNQWSQEGCPTGACLRSDVNITETEGALSMITKAGVPSNQVVVGVTSYGRSFAMAEAGCYGPDCTYLGSADDSQATPGKCTQSAGYIANAEILAILANSSRVNENYIDIDSNTNILVYDDTQWVGWMSEGIKNSRKSVYQGLSMGGWTDWATDLQKFNDAPFTSTSWTKFTSDVILDVDPYVEGNRTGNWTSLTCSDAAVQDALYMPCSQRWSELDASNAWSDAINVWTTIDEPKLGNTEPGFTLSIMNTFHAGESMNCGSIAPNGACSTTETCAWFEGFGDSGESGPAAMLIYNSFTVINELTDKLVDQAYSQLWYAINGIAATYIDNQLSDFEDTFAPVPPAKSDEWLDILIDLLGLGLTAVAAPFFDGVFGALPALEALGEAGAQVAQDVTYSAIAYGVSIATSTLPSAAPGDWTAESQDSFSATMGSVLYGWSNATANQLYTLFNGSETSITLLTTLISDGKLIEGSGGAPSVGYQVSDSTSSDVEAFIGKAFFGYSIPTLWTISGSAAFVIDSGYPCSAQNPLTDYMTASTQESTYACYNDNLYYLVYPDGTEDGCSDQHEEKCVKKYFTAPPGLDTLSSTTWGGITLSELIEGSVNTYIANGNANGGPVADPMDALTLKDLSNQNITTPGYIRLPVCTAQVAWASWTNPAQSNSSASGYPCNPLQGVTKCSGYTYEDETTSASPSVSDCKTLMKNIAGTSGEWTTGIDGQRAIAKYGTCKFGVQNVGVTGDVTYNTGSQDIVNIVTEAISKYEWEGHVGAKGYMKCSGDAGSQKVEWGLY</sequence>
<dbReference type="EC" id="3.2.1.14" evidence="8"/>
<dbReference type="EMBL" id="JQFZ01000111">
    <property type="protein sequence ID" value="KGO58768.1"/>
    <property type="molecule type" value="Genomic_DNA"/>
</dbReference>
<dbReference type="RefSeq" id="XP_016600132.1">
    <property type="nucleotide sequence ID" value="XM_016746416.1"/>
</dbReference>
<dbReference type="SMR" id="A0A0A2JVV3"/>
<dbReference type="STRING" id="27334.A0A0A2JVV3"/>
<dbReference type="GeneID" id="27681836"/>
<dbReference type="VEuPathDB" id="FungiDB:PEXP_069690"/>
<dbReference type="HOGENOM" id="CLU_001482_1_0_1"/>
<dbReference type="Proteomes" id="UP000030143">
    <property type="component" value="Unassembled WGS sequence"/>
</dbReference>
<dbReference type="GO" id="GO:0008061">
    <property type="term" value="F:chitin binding"/>
    <property type="evidence" value="ECO:0007669"/>
    <property type="project" value="UniProtKB-KW"/>
</dbReference>
<dbReference type="GO" id="GO:0008843">
    <property type="term" value="F:endochitinase activity"/>
    <property type="evidence" value="ECO:0007669"/>
    <property type="project" value="UniProtKB-EC"/>
</dbReference>
<dbReference type="GO" id="GO:0006032">
    <property type="term" value="P:chitin catabolic process"/>
    <property type="evidence" value="ECO:0007669"/>
    <property type="project" value="UniProtKB-KW"/>
</dbReference>
<dbReference type="GO" id="GO:0000272">
    <property type="term" value="P:polysaccharide catabolic process"/>
    <property type="evidence" value="ECO:0007669"/>
    <property type="project" value="UniProtKB-KW"/>
</dbReference>
<dbReference type="CDD" id="cd00035">
    <property type="entry name" value="ChtBD1"/>
    <property type="match status" value="1"/>
</dbReference>
<dbReference type="CDD" id="cd02878">
    <property type="entry name" value="GH18_zymocin_alpha"/>
    <property type="match status" value="1"/>
</dbReference>
<dbReference type="CDD" id="cd00118">
    <property type="entry name" value="LysM"/>
    <property type="match status" value="1"/>
</dbReference>
<dbReference type="Gene3D" id="3.10.50.10">
    <property type="match status" value="1"/>
</dbReference>
<dbReference type="Gene3D" id="3.30.60.10">
    <property type="entry name" value="Endochitinase-like"/>
    <property type="match status" value="1"/>
</dbReference>
<dbReference type="Gene3D" id="3.20.20.80">
    <property type="entry name" value="Glycosidases"/>
    <property type="match status" value="1"/>
</dbReference>
<dbReference type="Gene3D" id="3.10.350.10">
    <property type="entry name" value="LysM domain"/>
    <property type="match status" value="2"/>
</dbReference>
<dbReference type="InterPro" id="IPR001002">
    <property type="entry name" value="Chitin-bd_1"/>
</dbReference>
<dbReference type="InterPro" id="IPR011583">
    <property type="entry name" value="Chitinase_II/V-like_cat"/>
</dbReference>
<dbReference type="InterPro" id="IPR029070">
    <property type="entry name" value="Chitinase_insertion_sf"/>
</dbReference>
<dbReference type="InterPro" id="IPR029226">
    <property type="entry name" value="Ecp2-like"/>
</dbReference>
<dbReference type="InterPro" id="IPR036861">
    <property type="entry name" value="Endochitinase-like_sf"/>
</dbReference>
<dbReference type="InterPro" id="IPR001223">
    <property type="entry name" value="Glyco_hydro18_cat"/>
</dbReference>
<dbReference type="InterPro" id="IPR001579">
    <property type="entry name" value="Glyco_hydro_18_chit_AS"/>
</dbReference>
<dbReference type="InterPro" id="IPR017853">
    <property type="entry name" value="Glycoside_hydrolase_SF"/>
</dbReference>
<dbReference type="InterPro" id="IPR053214">
    <property type="entry name" value="LysM12-like"/>
</dbReference>
<dbReference type="InterPro" id="IPR018392">
    <property type="entry name" value="LysM_dom"/>
</dbReference>
<dbReference type="InterPro" id="IPR036779">
    <property type="entry name" value="LysM_dom_sf"/>
</dbReference>
<dbReference type="PANTHER" id="PTHR47700:SF1">
    <property type="entry name" value="CHITINASE"/>
    <property type="match status" value="1"/>
</dbReference>
<dbReference type="PANTHER" id="PTHR47700">
    <property type="entry name" value="V CHITINASE, PUTATIVE (AFU_ORTHOLOGUE AFUA_6G13720)-RELATED"/>
    <property type="match status" value="1"/>
</dbReference>
<dbReference type="Pfam" id="PF00704">
    <property type="entry name" value="Glyco_hydro_18"/>
    <property type="match status" value="1"/>
</dbReference>
<dbReference type="Pfam" id="PF14856">
    <property type="entry name" value="Hce2"/>
    <property type="match status" value="1"/>
</dbReference>
<dbReference type="Pfam" id="PF01476">
    <property type="entry name" value="LysM"/>
    <property type="match status" value="1"/>
</dbReference>
<dbReference type="SMART" id="SM00636">
    <property type="entry name" value="Glyco_18"/>
    <property type="match status" value="1"/>
</dbReference>
<dbReference type="SMART" id="SM00257">
    <property type="entry name" value="LysM"/>
    <property type="match status" value="2"/>
</dbReference>
<dbReference type="SUPFAM" id="SSF51445">
    <property type="entry name" value="(Trans)glycosidases"/>
    <property type="match status" value="1"/>
</dbReference>
<dbReference type="SUPFAM" id="SSF54556">
    <property type="entry name" value="Chitinase insertion domain"/>
    <property type="match status" value="1"/>
</dbReference>
<dbReference type="SUPFAM" id="SSF54106">
    <property type="entry name" value="LysM domain"/>
    <property type="match status" value="1"/>
</dbReference>
<dbReference type="SUPFAM" id="SSF57016">
    <property type="entry name" value="Plant lectins/antimicrobial peptides"/>
    <property type="match status" value="1"/>
</dbReference>
<dbReference type="PROSITE" id="PS50941">
    <property type="entry name" value="CHIT_BIND_I_2"/>
    <property type="match status" value="1"/>
</dbReference>
<dbReference type="PROSITE" id="PS01095">
    <property type="entry name" value="GH18_1"/>
    <property type="match status" value="1"/>
</dbReference>
<dbReference type="PROSITE" id="PS51910">
    <property type="entry name" value="GH18_2"/>
    <property type="match status" value="1"/>
</dbReference>
<dbReference type="PROSITE" id="PS51782">
    <property type="entry name" value="LYSM"/>
    <property type="match status" value="2"/>
</dbReference>
<accession>A0A0A2JVV3</accession>
<proteinExistence type="inferred from homology"/>
<reference key="1">
    <citation type="journal article" date="2015" name="Mol. Plant Microbe Interact.">
        <title>Genome, transcriptome, and functional analyses of Penicillium expansum provide new insights into secondary metabolism and pathogenicity.</title>
        <authorList>
            <person name="Ballester A.R."/>
            <person name="Marcet-Houben M."/>
            <person name="Levin E."/>
            <person name="Sela N."/>
            <person name="Selma-Lazaro C."/>
            <person name="Carmona L."/>
            <person name="Wisniewski M."/>
            <person name="Droby S."/>
            <person name="Gonzalez-Candelas L."/>
            <person name="Gabaldon T."/>
        </authorList>
    </citation>
    <scope>NUCLEOTIDE SEQUENCE [LARGE SCALE GENOMIC DNA]</scope>
    <source>
        <strain>MD-8</strain>
    </source>
</reference>
<reference key="2">
    <citation type="journal article" date="2020" name="Mol. Genet. Genomics">
        <title>Multiple transcriptomic analyses and characterization of pathogen-related core effectors and LysM family members reveal their differential roles in fungal growth and pathogenicity in Penicillium expansum.</title>
        <authorList>
            <person name="Chen D."/>
            <person name="Li G."/>
            <person name="Liu J."/>
            <person name="Wisniewski M."/>
            <person name="Droby S."/>
            <person name="Levin E."/>
            <person name="Huang S."/>
            <person name="Liu Y."/>
        </authorList>
    </citation>
    <scope>FUNCTION</scope>
    <scope>DISRUPTION PHENOTYPE</scope>
    <scope>DOMAIN</scope>
</reference>
<comment type="function">
    <text evidence="1 8">Probable chitinase involved in the degradation of chitin, a component of the cell walls of fungi and exoskeletal elements of some animals (including worms and arthropods) (By similarity). Might be involved in manipulation of host defenses for successful infection (Probable).</text>
</comment>
<comment type="catalytic activity">
    <reaction evidence="8">
        <text>Random endo-hydrolysis of N-acetyl-beta-D-glucosaminide (1-&gt;4)-beta-linkages in chitin and chitodextrins.</text>
        <dbReference type="EC" id="3.2.1.14"/>
    </reaction>
</comment>
<comment type="domain">
    <text evidence="8">The LysM (lysin motif) domains are small globular domains involved in binding chitin in eukaryotes. LysM18 contains 2 LysM domains.</text>
</comment>
<comment type="disruption phenotype">
    <text evidence="5">Leads to enhanced fungal virulence, with faster decaying on infected fruits.</text>
</comment>
<comment type="miscellaneous">
    <text evidence="7">In plants, chitin acts as a microbe-associated molecular pattern (MAMP) that is recognized by lysin motif (LysM)-containing plant cell surface-localized pattern recognition receptors (PRRs) that activate a plethora of downstream immune responses.</text>
</comment>
<comment type="similarity">
    <text evidence="7">Belongs to the glycosyl hydrolase 18 family. Chitinase class V subfamily.</text>
</comment>
<protein>
    <recommendedName>
        <fullName evidence="6">Probable chitinase LysM18</fullName>
        <ecNumber evidence="8">3.2.1.14</ecNumber>
    </recommendedName>
    <alternativeName>
        <fullName evidence="6">LysM domain-containing protein 18</fullName>
    </alternativeName>
    <alternativeName>
        <fullName evidence="6">Non-secreted LysM effector LysM18</fullName>
    </alternativeName>
</protein>
<name>LYS18_PENEN</name>
<evidence type="ECO:0000250" key="1">
    <source>
        <dbReference type="UniProtKB" id="Q873X9"/>
    </source>
</evidence>
<evidence type="ECO:0000255" key="2">
    <source>
        <dbReference type="PROSITE-ProRule" id="PRU00261"/>
    </source>
</evidence>
<evidence type="ECO:0000255" key="3">
    <source>
        <dbReference type="PROSITE-ProRule" id="PRU01118"/>
    </source>
</evidence>
<evidence type="ECO:0000255" key="4">
    <source>
        <dbReference type="PROSITE-ProRule" id="PRU01258"/>
    </source>
</evidence>
<evidence type="ECO:0000269" key="5">
    <source>
    </source>
</evidence>
<evidence type="ECO:0000303" key="6">
    <source>
    </source>
</evidence>
<evidence type="ECO:0000305" key="7"/>
<evidence type="ECO:0000305" key="8">
    <source>
    </source>
</evidence>
<feature type="chain" id="PRO_0000460663" description="Probable chitinase LysM18">
    <location>
        <begin position="1"/>
        <end position="1444"/>
    </location>
</feature>
<feature type="domain" description="LysM 1" evidence="3">
    <location>
        <begin position="256"/>
        <end position="302"/>
    </location>
</feature>
<feature type="domain" description="LysM 2" evidence="3">
    <location>
        <begin position="321"/>
        <end position="369"/>
    </location>
</feature>
<feature type="domain" description="Chitin-binding type-1" evidence="2">
    <location>
        <begin position="382"/>
        <end position="450"/>
    </location>
</feature>
<feature type="domain" description="GH18" evidence="4">
    <location>
        <begin position="461"/>
        <end position="831"/>
    </location>
</feature>
<feature type="active site" description="Proton donor" evidence="4">
    <location>
        <position position="582"/>
    </location>
</feature>
<feature type="binding site" evidence="4">
    <location>
        <position position="583"/>
    </location>
    <ligand>
        <name>chitin</name>
        <dbReference type="ChEBI" id="CHEBI:17029"/>
    </ligand>
</feature>
<feature type="binding site" evidence="4">
    <location>
        <position position="808"/>
    </location>
    <ligand>
        <name>chitin</name>
        <dbReference type="ChEBI" id="CHEBI:17029"/>
    </ligand>
</feature>
<feature type="disulfide bond" evidence="2">
    <location>
        <begin position="385"/>
        <end position="413"/>
    </location>
</feature>
<feature type="disulfide bond" evidence="2">
    <location>
        <begin position="407"/>
        <end position="419"/>
    </location>
</feature>
<feature type="disulfide bond" evidence="2">
    <location>
        <begin position="412"/>
        <end position="426"/>
    </location>
</feature>
<feature type="disulfide bond" evidence="2">
    <location>
        <begin position="444"/>
        <end position="448"/>
    </location>
</feature>